<evidence type="ECO:0000255" key="1"/>
<evidence type="ECO:0000255" key="2">
    <source>
        <dbReference type="PROSITE-ProRule" id="PRU00175"/>
    </source>
</evidence>
<evidence type="ECO:0000256" key="3">
    <source>
        <dbReference type="SAM" id="MobiDB-lite"/>
    </source>
</evidence>
<evidence type="ECO:0000269" key="4">
    <source>
    </source>
</evidence>
<evidence type="ECO:0000269" key="5">
    <source>
    </source>
</evidence>
<evidence type="ECO:0000303" key="6">
    <source>
    </source>
</evidence>
<evidence type="ECO:0000303" key="7">
    <source>
    </source>
</evidence>
<evidence type="ECO:0000305" key="8"/>
<evidence type="ECO:0000312" key="9">
    <source>
        <dbReference type="EMBL" id="BAD27706.1"/>
    </source>
</evidence>
<evidence type="ECO:0000312" key="10">
    <source>
        <dbReference type="EMBL" id="BAS77787.1"/>
    </source>
</evidence>
<evidence type="ECO:0000312" key="11">
    <source>
        <dbReference type="EMBL" id="EEE56612.1"/>
    </source>
</evidence>
<name>HEI10_ORYSJ</name>
<dbReference type="EC" id="2.3.2.27" evidence="8"/>
<dbReference type="EMBL" id="JQ624877">
    <property type="protein sequence ID" value="AFJ04809.1"/>
    <property type="molecule type" value="mRNA"/>
</dbReference>
<dbReference type="EMBL" id="JQ624878">
    <property type="protein sequence ID" value="AFJ04810.1"/>
    <property type="molecule type" value="mRNA"/>
</dbReference>
<dbReference type="EMBL" id="AP004070">
    <property type="protein sequence ID" value="BAD27706.1"/>
    <property type="molecule type" value="Genomic_DNA"/>
</dbReference>
<dbReference type="EMBL" id="AP008208">
    <property type="protein sequence ID" value="BAF08285.1"/>
    <property type="molecule type" value="Genomic_DNA"/>
</dbReference>
<dbReference type="EMBL" id="AP014958">
    <property type="protein sequence ID" value="BAS77787.1"/>
    <property type="molecule type" value="Genomic_DNA"/>
</dbReference>
<dbReference type="EMBL" id="CM000139">
    <property type="protein sequence ID" value="EEE56612.1"/>
    <property type="status" value="ALT_SEQ"/>
    <property type="molecule type" value="Genomic_DNA"/>
</dbReference>
<dbReference type="RefSeq" id="XP_015623603.1">
    <property type="nucleotide sequence ID" value="XM_015768117.1"/>
</dbReference>
<dbReference type="RefSeq" id="XP_015623604.1">
    <property type="nucleotide sequence ID" value="XM_015768118.1"/>
</dbReference>
<dbReference type="RefSeq" id="XP_015623605.1">
    <property type="nucleotide sequence ID" value="XM_015768119.1"/>
</dbReference>
<dbReference type="SMR" id="I6PL68"/>
<dbReference type="FunCoup" id="I6PL68">
    <property type="interactions" value="1"/>
</dbReference>
<dbReference type="STRING" id="39947.I6PL68"/>
<dbReference type="PaxDb" id="39947-I6PL68"/>
<dbReference type="EnsemblPlants" id="Os02t0232100-01">
    <molecule id="I6PL68-1"/>
    <property type="protein sequence ID" value="Os02t0232100-01"/>
    <property type="gene ID" value="Os02g0232100"/>
</dbReference>
<dbReference type="Gramene" id="Os02t0232100-01">
    <molecule id="I6PL68-1"/>
    <property type="protein sequence ID" value="Os02t0232100-01"/>
    <property type="gene ID" value="Os02g0232100"/>
</dbReference>
<dbReference type="KEGG" id="dosa:Os02g0232100"/>
<dbReference type="eggNOG" id="ENOG502RMFV">
    <property type="taxonomic scope" value="Eukaryota"/>
</dbReference>
<dbReference type="HOGENOM" id="CLU_052740_0_0_1"/>
<dbReference type="InParanoid" id="I6PL68"/>
<dbReference type="OMA" id="DEWINMV"/>
<dbReference type="OrthoDB" id="441210at2759"/>
<dbReference type="UniPathway" id="UPA00143"/>
<dbReference type="Proteomes" id="UP000000763">
    <property type="component" value="Chromosome 2"/>
</dbReference>
<dbReference type="Proteomes" id="UP000007752">
    <property type="component" value="Chromosome 2"/>
</dbReference>
<dbReference type="Proteomes" id="UP000059680">
    <property type="component" value="Chromosome 2"/>
</dbReference>
<dbReference type="GO" id="GO:0005712">
    <property type="term" value="C:chiasma"/>
    <property type="evidence" value="ECO:0000314"/>
    <property type="project" value="UniProtKB"/>
</dbReference>
<dbReference type="GO" id="GO:0005694">
    <property type="term" value="C:chromosome"/>
    <property type="evidence" value="ECO:0000314"/>
    <property type="project" value="UniProtKB"/>
</dbReference>
<dbReference type="GO" id="GO:0016740">
    <property type="term" value="F:transferase activity"/>
    <property type="evidence" value="ECO:0007669"/>
    <property type="project" value="UniProtKB-KW"/>
</dbReference>
<dbReference type="GO" id="GO:0008270">
    <property type="term" value="F:zinc ion binding"/>
    <property type="evidence" value="ECO:0007669"/>
    <property type="project" value="UniProtKB-KW"/>
</dbReference>
<dbReference type="GO" id="GO:0051026">
    <property type="term" value="P:chiasma assembly"/>
    <property type="evidence" value="ECO:0000318"/>
    <property type="project" value="GO_Central"/>
</dbReference>
<dbReference type="GO" id="GO:0007129">
    <property type="term" value="P:homologous chromosome pairing at meiosis"/>
    <property type="evidence" value="ECO:0000314"/>
    <property type="project" value="UniProtKB"/>
</dbReference>
<dbReference type="GO" id="GO:0016567">
    <property type="term" value="P:protein ubiquitination"/>
    <property type="evidence" value="ECO:0007669"/>
    <property type="project" value="UniProtKB-UniPathway"/>
</dbReference>
<dbReference type="GO" id="GO:0007131">
    <property type="term" value="P:reciprocal meiotic recombination"/>
    <property type="evidence" value="ECO:0000315"/>
    <property type="project" value="UniProtKB"/>
</dbReference>
<dbReference type="FunFam" id="3.30.40.10:FF:000966">
    <property type="entry name" value="E3 ubiquitin-protein ligase CCNB1IP1 homolog"/>
    <property type="match status" value="1"/>
</dbReference>
<dbReference type="Gene3D" id="3.30.40.10">
    <property type="entry name" value="Zinc/RING finger domain, C3HC4 (zinc finger)"/>
    <property type="match status" value="1"/>
</dbReference>
<dbReference type="InterPro" id="IPR055328">
    <property type="entry name" value="HEI10-like"/>
</dbReference>
<dbReference type="InterPro" id="IPR001841">
    <property type="entry name" value="Znf_RING"/>
</dbReference>
<dbReference type="InterPro" id="IPR013083">
    <property type="entry name" value="Znf_RING/FYVE/PHD"/>
</dbReference>
<dbReference type="PANTHER" id="PTHR47384">
    <property type="entry name" value="E3 UBIQUITIN-PROTEIN LIGASE CCNB1IP1 HOMOLOG"/>
    <property type="match status" value="1"/>
</dbReference>
<dbReference type="PANTHER" id="PTHR47384:SF2">
    <property type="entry name" value="E3 UBIQUITIN-PROTEIN LIGASE CCNB1IP1 HOMOLOG"/>
    <property type="match status" value="1"/>
</dbReference>
<dbReference type="Pfam" id="PF14634">
    <property type="entry name" value="zf-RING_5"/>
    <property type="match status" value="1"/>
</dbReference>
<dbReference type="SUPFAM" id="SSF90257">
    <property type="entry name" value="Myosin rod fragments"/>
    <property type="match status" value="1"/>
</dbReference>
<dbReference type="SUPFAM" id="SSF57850">
    <property type="entry name" value="RING/U-box"/>
    <property type="match status" value="1"/>
</dbReference>
<dbReference type="PROSITE" id="PS50089">
    <property type="entry name" value="ZF_RING_2"/>
    <property type="match status" value="1"/>
</dbReference>
<sequence length="303" mass="34409">MKCNACWRELEGQAVSTTCGHLLCTEDAKKILSNDAACPICDQVLSKSHMRPVDTNPNDDWTNMSMAGVSPQILMKSAYRSVMFYIGQKELEMQYKMNRIVGQCRQKCELMQAKFTEKLEEVHTAYQKMAKKCQLMEQEVENLSRDKQELQEKFAEKSRQKRKLDEMYDQLRSEYESAKRSAIQPANNYFPRAQPDLFSGVPNIMDSSDPLRQGLAGLPETPGRRDEGWAPPPRQRRSTSGPFELSAGSPAHNAAPPVDIRPRQPARPVFGTAMNNTSAALRNMIISPVKRPQLSRNRPHMFT</sequence>
<reference key="1">
    <citation type="journal article" date="2012" name="PLoS Genet.">
        <title>The role of rice HEI10 in the formation of meiotic crossovers.</title>
        <authorList>
            <person name="Wang K."/>
            <person name="Wang M."/>
            <person name="Tang D."/>
            <person name="Shen Y."/>
            <person name="Miao C."/>
            <person name="Hu Q."/>
            <person name="Lu T."/>
            <person name="Cheng Z."/>
        </authorList>
    </citation>
    <scope>NUCLEOTIDE SEQUENCE [MRNA] (ISOFORMS 1 AND 2)</scope>
    <scope>FUNCTION</scope>
    <scope>DISRUPTION PHENOTYPE</scope>
    <scope>SUBCELLULAR LOCATION</scope>
    <scope>TISSUE SPECIFICITY</scope>
    <source>
        <strain>cv. Nipponbare</strain>
        <strain>cv. Wuxiangjing 9</strain>
    </source>
</reference>
<reference key="2">
    <citation type="journal article" date="2005" name="Nature">
        <title>The map-based sequence of the rice genome.</title>
        <authorList>
            <consortium name="International rice genome sequencing project (IRGSP)"/>
        </authorList>
    </citation>
    <scope>NUCLEOTIDE SEQUENCE [LARGE SCALE GENOMIC DNA]</scope>
    <source>
        <strain>cv. Nipponbare</strain>
    </source>
</reference>
<reference key="3">
    <citation type="journal article" date="2008" name="Nucleic Acids Res.">
        <title>The rice annotation project database (RAP-DB): 2008 update.</title>
        <authorList>
            <consortium name="The rice annotation project (RAP)"/>
        </authorList>
    </citation>
    <scope>GENOME REANNOTATION</scope>
    <source>
        <strain>cv. Nipponbare</strain>
    </source>
</reference>
<reference key="4">
    <citation type="journal article" date="2013" name="Rice">
        <title>Improvement of the Oryza sativa Nipponbare reference genome using next generation sequence and optical map data.</title>
        <authorList>
            <person name="Kawahara Y."/>
            <person name="de la Bastide M."/>
            <person name="Hamilton J.P."/>
            <person name="Kanamori H."/>
            <person name="McCombie W.R."/>
            <person name="Ouyang S."/>
            <person name="Schwartz D.C."/>
            <person name="Tanaka T."/>
            <person name="Wu J."/>
            <person name="Zhou S."/>
            <person name="Childs K.L."/>
            <person name="Davidson R.M."/>
            <person name="Lin H."/>
            <person name="Quesada-Ocampo L."/>
            <person name="Vaillancourt B."/>
            <person name="Sakai H."/>
            <person name="Lee S.S."/>
            <person name="Kim J."/>
            <person name="Numa H."/>
            <person name="Itoh T."/>
            <person name="Buell C.R."/>
            <person name="Matsumoto T."/>
        </authorList>
    </citation>
    <scope>GENOME REANNOTATION</scope>
    <source>
        <strain>cv. Nipponbare</strain>
    </source>
</reference>
<reference key="5">
    <citation type="journal article" date="2005" name="PLoS Biol.">
        <title>The genomes of Oryza sativa: a history of duplications.</title>
        <authorList>
            <person name="Yu J."/>
            <person name="Wang J."/>
            <person name="Lin W."/>
            <person name="Li S."/>
            <person name="Li H."/>
            <person name="Zhou J."/>
            <person name="Ni P."/>
            <person name="Dong W."/>
            <person name="Hu S."/>
            <person name="Zeng C."/>
            <person name="Zhang J."/>
            <person name="Zhang Y."/>
            <person name="Li R."/>
            <person name="Xu Z."/>
            <person name="Li S."/>
            <person name="Li X."/>
            <person name="Zheng H."/>
            <person name="Cong L."/>
            <person name="Lin L."/>
            <person name="Yin J."/>
            <person name="Geng J."/>
            <person name="Li G."/>
            <person name="Shi J."/>
            <person name="Liu J."/>
            <person name="Lv H."/>
            <person name="Li J."/>
            <person name="Wang J."/>
            <person name="Deng Y."/>
            <person name="Ran L."/>
            <person name="Shi X."/>
            <person name="Wang X."/>
            <person name="Wu Q."/>
            <person name="Li C."/>
            <person name="Ren X."/>
            <person name="Wang J."/>
            <person name="Wang X."/>
            <person name="Li D."/>
            <person name="Liu D."/>
            <person name="Zhang X."/>
            <person name="Ji Z."/>
            <person name="Zhao W."/>
            <person name="Sun Y."/>
            <person name="Zhang Z."/>
            <person name="Bao J."/>
            <person name="Han Y."/>
            <person name="Dong L."/>
            <person name="Ji J."/>
            <person name="Chen P."/>
            <person name="Wu S."/>
            <person name="Liu J."/>
            <person name="Xiao Y."/>
            <person name="Bu D."/>
            <person name="Tan J."/>
            <person name="Yang L."/>
            <person name="Ye C."/>
            <person name="Zhang J."/>
            <person name="Xu J."/>
            <person name="Zhou Y."/>
            <person name="Yu Y."/>
            <person name="Zhang B."/>
            <person name="Zhuang S."/>
            <person name="Wei H."/>
            <person name="Liu B."/>
            <person name="Lei M."/>
            <person name="Yu H."/>
            <person name="Li Y."/>
            <person name="Xu H."/>
            <person name="Wei S."/>
            <person name="He X."/>
            <person name="Fang L."/>
            <person name="Zhang Z."/>
            <person name="Zhang Y."/>
            <person name="Huang X."/>
            <person name="Su Z."/>
            <person name="Tong W."/>
            <person name="Li J."/>
            <person name="Tong Z."/>
            <person name="Li S."/>
            <person name="Ye J."/>
            <person name="Wang L."/>
            <person name="Fang L."/>
            <person name="Lei T."/>
            <person name="Chen C.-S."/>
            <person name="Chen H.-C."/>
            <person name="Xu Z."/>
            <person name="Li H."/>
            <person name="Huang H."/>
            <person name="Zhang F."/>
            <person name="Xu H."/>
            <person name="Li N."/>
            <person name="Zhao C."/>
            <person name="Li S."/>
            <person name="Dong L."/>
            <person name="Huang Y."/>
            <person name="Li L."/>
            <person name="Xi Y."/>
            <person name="Qi Q."/>
            <person name="Li W."/>
            <person name="Zhang B."/>
            <person name="Hu W."/>
            <person name="Zhang Y."/>
            <person name="Tian X."/>
            <person name="Jiao Y."/>
            <person name="Liang X."/>
            <person name="Jin J."/>
            <person name="Gao L."/>
            <person name="Zheng W."/>
            <person name="Hao B."/>
            <person name="Liu S.-M."/>
            <person name="Wang W."/>
            <person name="Yuan L."/>
            <person name="Cao M."/>
            <person name="McDermott J."/>
            <person name="Samudrala R."/>
            <person name="Wang J."/>
            <person name="Wong G.K.-S."/>
            <person name="Yang H."/>
        </authorList>
    </citation>
    <scope>NUCLEOTIDE SEQUENCE [LARGE SCALE GENOMIC DNA]</scope>
    <source>
        <strain>cv. Nipponbare</strain>
    </source>
</reference>
<reference key="6">
    <citation type="journal article" date="2019" name="Plant Physiol.">
        <title>A multiprotein complex regulates interference-sensitive crossover formation in rice.</title>
        <authorList>
            <person name="Zhang J."/>
            <person name="Wang C."/>
            <person name="Higgins J.D."/>
            <person name="Kim Y.J."/>
            <person name="Moon S."/>
            <person name="Jung K.H."/>
            <person name="Qu S."/>
            <person name="Liang W."/>
        </authorList>
    </citation>
    <scope>INTERACTION WITH ZIP4 AND PTD</scope>
</reference>
<proteinExistence type="evidence at protein level"/>
<organism>
    <name type="scientific">Oryza sativa subsp. japonica</name>
    <name type="common">Rice</name>
    <dbReference type="NCBI Taxonomy" id="39947"/>
    <lineage>
        <taxon>Eukaryota</taxon>
        <taxon>Viridiplantae</taxon>
        <taxon>Streptophyta</taxon>
        <taxon>Embryophyta</taxon>
        <taxon>Tracheophyta</taxon>
        <taxon>Spermatophyta</taxon>
        <taxon>Magnoliopsida</taxon>
        <taxon>Liliopsida</taxon>
        <taxon>Poales</taxon>
        <taxon>Poaceae</taxon>
        <taxon>BOP clade</taxon>
        <taxon>Oryzoideae</taxon>
        <taxon>Oryzeae</taxon>
        <taxon>Oryzinae</taxon>
        <taxon>Oryza</taxon>
        <taxon>Oryza sativa</taxon>
    </lineage>
</organism>
<accession>I6PL68</accession>
<accession>A0A0P0VGR2</accession>
<accession>B9F4F5</accession>
<accession>I6PII6</accession>
<accession>Q6EUG3</accession>
<keyword id="KW-0025">Alternative splicing</keyword>
<keyword id="KW-0158">Chromosome</keyword>
<keyword id="KW-0175">Coiled coil</keyword>
<keyword id="KW-0233">DNA recombination</keyword>
<keyword id="KW-0469">Meiosis</keyword>
<keyword id="KW-0479">Metal-binding</keyword>
<keyword id="KW-0539">Nucleus</keyword>
<keyword id="KW-1185">Reference proteome</keyword>
<keyword id="KW-0808">Transferase</keyword>
<keyword id="KW-0833">Ubl conjugation pathway</keyword>
<keyword id="KW-0862">Zinc</keyword>
<keyword id="KW-0863">Zinc-finger</keyword>
<gene>
    <name evidence="6" type="primary">HEI10</name>
    <name evidence="10" type="ordered locus">Os02g0232100</name>
    <name evidence="8" type="ordered locus">LOC_Os02g13810</name>
    <name evidence="9" type="ORF">OJ1705_E12.17</name>
    <name evidence="11" type="ORF">OsJ_05990</name>
</gene>
<feature type="chain" id="PRO_0000425731" description="E3 ubiquitin-protein ligase CCNB1IP1 homolog">
    <location>
        <begin position="1"/>
        <end position="303"/>
    </location>
</feature>
<feature type="zinc finger region" description="RING-type; degenerate" evidence="2">
    <location>
        <begin position="3"/>
        <end position="42"/>
    </location>
</feature>
<feature type="region of interest" description="Disordered" evidence="3">
    <location>
        <begin position="201"/>
        <end position="268"/>
    </location>
</feature>
<feature type="coiled-coil region" evidence="1">
    <location>
        <begin position="119"/>
        <end position="184"/>
    </location>
</feature>
<feature type="splice variant" id="VSP_053850" description="In isoform 2." evidence="6">
    <location>
        <begin position="214"/>
        <end position="222"/>
    </location>
</feature>
<feature type="sequence conflict" description="In Ref. 1; AFJ04809/AFJ04810." evidence="8" ref="1">
    <original>T</original>
    <variation>TL</variation>
    <location>
        <position position="303"/>
    </location>
</feature>
<protein>
    <recommendedName>
        <fullName evidence="8">E3 ubiquitin-protein ligase CCNB1IP1 homolog</fullName>
        <ecNumber evidence="8">2.3.2.27</ecNumber>
    </recommendedName>
    <alternativeName>
        <fullName evidence="6">RING finger-containing protein HEI10</fullName>
        <shortName evidence="7">OsHEI10</shortName>
    </alternativeName>
    <alternativeName>
        <fullName evidence="8">RING-type E3 ubiquitin transferase HEI10</fullName>
    </alternativeName>
</protein>
<comment type="function">
    <text evidence="4">Ubiquitin E3 ligase required for class I crossover (CO) formation during meiosis.</text>
</comment>
<comment type="catalytic activity">
    <reaction>
        <text>S-ubiquitinyl-[E2 ubiquitin-conjugating enzyme]-L-cysteine + [acceptor protein]-L-lysine = [E2 ubiquitin-conjugating enzyme]-L-cysteine + N(6)-ubiquitinyl-[acceptor protein]-L-lysine.</text>
        <dbReference type="EC" id="2.3.2.27"/>
    </reaction>
</comment>
<comment type="pathway">
    <text evidence="8">Protein modification; protein ubiquitination.</text>
</comment>
<comment type="subunit">
    <text evidence="5">Interacts with ZIP4 and PTD.</text>
</comment>
<comment type="subcellular location">
    <subcellularLocation>
        <location evidence="4">Nucleus</location>
    </subcellularLocation>
    <subcellularLocation>
        <location evidence="4">Chromosome</location>
    </subcellularLocation>
    <text evidence="4">Dynamic localization on the meiotic chromosomes. Initially appears as distinct foci. Later observed along the chromosomes and finally restrict to prominent foci that specially localize to chiasma sites. Extends along the chromosome in the wake of synapsis.</text>
</comment>
<comment type="alternative products">
    <event type="alternative splicing"/>
    <isoform>
        <id>I6PL68-1</id>
        <name>1</name>
        <name>HEI10A</name>
        <sequence type="displayed"/>
    </isoform>
    <isoform>
        <id>I6PL68-2</id>
        <name>2</name>
        <name>HEI10B</name>
        <sequence type="described" ref="VSP_053850"/>
    </isoform>
</comment>
<comment type="tissue specificity">
    <text evidence="4">Expressed in young panicles.</text>
</comment>
<comment type="disruption phenotype">
    <text evidence="4">The mutants hei10-1 and hei10-2 have normal vegetative growth but exhibited complete sterility, due to shrunken and inviable pollen as well as sterile female gametes. Reduced chiasma frequency, with a random distribution among cells of remaining chiasmata, but normal early recombination events and synaptonemal complex (SC) formation.</text>
</comment>
<comment type="sequence caution" evidence="8">
    <conflict type="erroneous gene model prediction">
        <sequence resource="EMBL-CDS" id="EEE56612"/>
    </conflict>
</comment>